<proteinExistence type="inferred from homology"/>
<name>HEM1_CUPPJ</name>
<evidence type="ECO:0000255" key="1">
    <source>
        <dbReference type="HAMAP-Rule" id="MF_00087"/>
    </source>
</evidence>
<evidence type="ECO:0000305" key="2"/>
<sequence length="434" mass="47659">MQLLAIGINHTTAPVSLRERVAFPLEQIKPALGALRTHLAGRNGTEAAILSTCNRTEIYCATDILKPGAEGFEHTLRWLSQHHNVPASDLAPHLYSLPQSEAVRHAFRVASGLDSMVLGETQILGQLKDAVRTAGEAGSLGTYLNQLFQRTFAVAKEVRGQTEIGAHSVSMAAAAVRLAQRIFESVSTQRVLFIGAGEMIELCATHFAAQKPRQVVVANRTVERGEKLAEQLAEQGLTTQAIRLQELGERLHEFDIVVSCTASSLPIIGLGAVERAVKRRKHRPIMMVDLAVPRDVEPEVARLDDVFLYTVDDLGAVVREGNALRQAAVAQAEAIIESRVQNFMHWLETRSVVPVIRELQTAGESIRQAELERARRMLARGDDPEAVLEALSGALTRKFLHGPTHALNHMQGEDREALVRLVPGLFRQSSHSER</sequence>
<comment type="function">
    <text evidence="1">Catalyzes the NADPH-dependent reduction of glutamyl-tRNA(Glu) to glutamate 1-semialdehyde (GSA).</text>
</comment>
<comment type="catalytic activity">
    <reaction evidence="1">
        <text>(S)-4-amino-5-oxopentanoate + tRNA(Glu) + NADP(+) = L-glutamyl-tRNA(Glu) + NADPH + H(+)</text>
        <dbReference type="Rhea" id="RHEA:12344"/>
        <dbReference type="Rhea" id="RHEA-COMP:9663"/>
        <dbReference type="Rhea" id="RHEA-COMP:9680"/>
        <dbReference type="ChEBI" id="CHEBI:15378"/>
        <dbReference type="ChEBI" id="CHEBI:57501"/>
        <dbReference type="ChEBI" id="CHEBI:57783"/>
        <dbReference type="ChEBI" id="CHEBI:58349"/>
        <dbReference type="ChEBI" id="CHEBI:78442"/>
        <dbReference type="ChEBI" id="CHEBI:78520"/>
        <dbReference type="EC" id="1.2.1.70"/>
    </reaction>
</comment>
<comment type="pathway">
    <text evidence="1">Porphyrin-containing compound metabolism; protoporphyrin-IX biosynthesis; 5-aminolevulinate from L-glutamyl-tRNA(Glu): step 1/2.</text>
</comment>
<comment type="subunit">
    <text evidence="1">Homodimer.</text>
</comment>
<comment type="domain">
    <text evidence="1">Possesses an unusual extended V-shaped dimeric structure with each monomer consisting of three distinct domains arranged along a curved 'spinal' alpha-helix. The N-terminal catalytic domain specifically recognizes the glutamate moiety of the substrate. The second domain is the NADPH-binding domain, and the third C-terminal domain is responsible for dimerization.</text>
</comment>
<comment type="miscellaneous">
    <text evidence="1">During catalysis, the active site Cys acts as a nucleophile attacking the alpha-carbonyl group of tRNA-bound glutamate with the formation of a thioester intermediate between enzyme and glutamate, and the concomitant release of tRNA(Glu). The thioester intermediate is finally reduced by direct hydride transfer from NADPH, to form the product GSA.</text>
</comment>
<comment type="similarity">
    <text evidence="1">Belongs to the glutamyl-tRNA reductase family.</text>
</comment>
<comment type="sequence caution" evidence="2">
    <conflict type="erroneous initiation">
        <sequence resource="EMBL-CDS" id="AAZ62403"/>
    </conflict>
</comment>
<dbReference type="EC" id="1.2.1.70" evidence="1"/>
<dbReference type="EMBL" id="CP000090">
    <property type="protein sequence ID" value="AAZ62403.1"/>
    <property type="status" value="ALT_INIT"/>
    <property type="molecule type" value="Genomic_DNA"/>
</dbReference>
<dbReference type="SMR" id="Q46WT0"/>
<dbReference type="STRING" id="264198.Reut_A3043"/>
<dbReference type="KEGG" id="reu:Reut_A3043"/>
<dbReference type="eggNOG" id="COG0373">
    <property type="taxonomic scope" value="Bacteria"/>
</dbReference>
<dbReference type="HOGENOM" id="CLU_035113_2_2_4"/>
<dbReference type="OrthoDB" id="110209at2"/>
<dbReference type="UniPathway" id="UPA00251">
    <property type="reaction ID" value="UER00316"/>
</dbReference>
<dbReference type="GO" id="GO:0008883">
    <property type="term" value="F:glutamyl-tRNA reductase activity"/>
    <property type="evidence" value="ECO:0007669"/>
    <property type="project" value="UniProtKB-UniRule"/>
</dbReference>
<dbReference type="GO" id="GO:0050661">
    <property type="term" value="F:NADP binding"/>
    <property type="evidence" value="ECO:0007669"/>
    <property type="project" value="InterPro"/>
</dbReference>
<dbReference type="GO" id="GO:0019353">
    <property type="term" value="P:protoporphyrinogen IX biosynthetic process from glutamate"/>
    <property type="evidence" value="ECO:0007669"/>
    <property type="project" value="TreeGrafter"/>
</dbReference>
<dbReference type="CDD" id="cd05213">
    <property type="entry name" value="NAD_bind_Glutamyl_tRNA_reduct"/>
    <property type="match status" value="1"/>
</dbReference>
<dbReference type="FunFam" id="3.30.460.30:FF:000001">
    <property type="entry name" value="Glutamyl-tRNA reductase"/>
    <property type="match status" value="1"/>
</dbReference>
<dbReference type="FunFam" id="3.40.50.720:FF:000031">
    <property type="entry name" value="Glutamyl-tRNA reductase"/>
    <property type="match status" value="1"/>
</dbReference>
<dbReference type="Gene3D" id="3.30.460.30">
    <property type="entry name" value="Glutamyl-tRNA reductase, N-terminal domain"/>
    <property type="match status" value="1"/>
</dbReference>
<dbReference type="Gene3D" id="3.40.50.720">
    <property type="entry name" value="NAD(P)-binding Rossmann-like Domain"/>
    <property type="match status" value="1"/>
</dbReference>
<dbReference type="HAMAP" id="MF_00087">
    <property type="entry name" value="Glu_tRNA_reductase"/>
    <property type="match status" value="1"/>
</dbReference>
<dbReference type="InterPro" id="IPR000343">
    <property type="entry name" value="4pyrrol_synth_GluRdtase"/>
</dbReference>
<dbReference type="InterPro" id="IPR015896">
    <property type="entry name" value="4pyrrol_synth_GluRdtase_dimer"/>
</dbReference>
<dbReference type="InterPro" id="IPR015895">
    <property type="entry name" value="4pyrrol_synth_GluRdtase_N"/>
</dbReference>
<dbReference type="InterPro" id="IPR018214">
    <property type="entry name" value="GluRdtase_CS"/>
</dbReference>
<dbReference type="InterPro" id="IPR036453">
    <property type="entry name" value="GluRdtase_dimer_dom_sf"/>
</dbReference>
<dbReference type="InterPro" id="IPR036343">
    <property type="entry name" value="GluRdtase_N_sf"/>
</dbReference>
<dbReference type="InterPro" id="IPR036291">
    <property type="entry name" value="NAD(P)-bd_dom_sf"/>
</dbReference>
<dbReference type="InterPro" id="IPR006151">
    <property type="entry name" value="Shikm_DH/Glu-tRNA_Rdtase"/>
</dbReference>
<dbReference type="NCBIfam" id="TIGR01035">
    <property type="entry name" value="hemA"/>
    <property type="match status" value="1"/>
</dbReference>
<dbReference type="PANTHER" id="PTHR43013">
    <property type="entry name" value="GLUTAMYL-TRNA REDUCTASE"/>
    <property type="match status" value="1"/>
</dbReference>
<dbReference type="PANTHER" id="PTHR43013:SF1">
    <property type="entry name" value="GLUTAMYL-TRNA REDUCTASE"/>
    <property type="match status" value="1"/>
</dbReference>
<dbReference type="Pfam" id="PF00745">
    <property type="entry name" value="GlutR_dimer"/>
    <property type="match status" value="1"/>
</dbReference>
<dbReference type="Pfam" id="PF05201">
    <property type="entry name" value="GlutR_N"/>
    <property type="match status" value="1"/>
</dbReference>
<dbReference type="Pfam" id="PF01488">
    <property type="entry name" value="Shikimate_DH"/>
    <property type="match status" value="1"/>
</dbReference>
<dbReference type="PIRSF" id="PIRSF000445">
    <property type="entry name" value="4pyrrol_synth_GluRdtase"/>
    <property type="match status" value="1"/>
</dbReference>
<dbReference type="SUPFAM" id="SSF69742">
    <property type="entry name" value="Glutamyl tRNA-reductase catalytic, N-terminal domain"/>
    <property type="match status" value="1"/>
</dbReference>
<dbReference type="SUPFAM" id="SSF69075">
    <property type="entry name" value="Glutamyl tRNA-reductase dimerization domain"/>
    <property type="match status" value="1"/>
</dbReference>
<dbReference type="SUPFAM" id="SSF51735">
    <property type="entry name" value="NAD(P)-binding Rossmann-fold domains"/>
    <property type="match status" value="1"/>
</dbReference>
<dbReference type="PROSITE" id="PS00747">
    <property type="entry name" value="GLUTR"/>
    <property type="match status" value="1"/>
</dbReference>
<reference key="1">
    <citation type="journal article" date="2010" name="PLoS ONE">
        <title>The complete multipartite genome sequence of Cupriavidus necator JMP134, a versatile pollutant degrader.</title>
        <authorList>
            <person name="Lykidis A."/>
            <person name="Perez-Pantoja D."/>
            <person name="Ledger T."/>
            <person name="Mavromatis K."/>
            <person name="Anderson I.J."/>
            <person name="Ivanova N.N."/>
            <person name="Hooper S.D."/>
            <person name="Lapidus A."/>
            <person name="Lucas S."/>
            <person name="Gonzalez B."/>
            <person name="Kyrpides N.C."/>
        </authorList>
    </citation>
    <scope>NUCLEOTIDE SEQUENCE [LARGE SCALE GENOMIC DNA]</scope>
    <source>
        <strain>JMP134 / LMG 1197</strain>
    </source>
</reference>
<organism>
    <name type="scientific">Cupriavidus pinatubonensis (strain JMP 134 / LMG 1197)</name>
    <name type="common">Cupriavidus necator (strain JMP 134)</name>
    <dbReference type="NCBI Taxonomy" id="264198"/>
    <lineage>
        <taxon>Bacteria</taxon>
        <taxon>Pseudomonadati</taxon>
        <taxon>Pseudomonadota</taxon>
        <taxon>Betaproteobacteria</taxon>
        <taxon>Burkholderiales</taxon>
        <taxon>Burkholderiaceae</taxon>
        <taxon>Cupriavidus</taxon>
    </lineage>
</organism>
<protein>
    <recommendedName>
        <fullName evidence="1">Glutamyl-tRNA reductase</fullName>
        <shortName evidence="1">GluTR</shortName>
        <ecNumber evidence="1">1.2.1.70</ecNumber>
    </recommendedName>
</protein>
<keyword id="KW-0521">NADP</keyword>
<keyword id="KW-0560">Oxidoreductase</keyword>
<keyword id="KW-0627">Porphyrin biosynthesis</keyword>
<accession>Q46WT0</accession>
<feature type="chain" id="PRO_0000335062" description="Glutamyl-tRNA reductase">
    <location>
        <begin position="1"/>
        <end position="434"/>
    </location>
</feature>
<feature type="active site" description="Nucleophile" evidence="1">
    <location>
        <position position="53"/>
    </location>
</feature>
<feature type="binding site" evidence="1">
    <location>
        <begin position="52"/>
        <end position="55"/>
    </location>
    <ligand>
        <name>substrate</name>
    </ligand>
</feature>
<feature type="binding site" evidence="1">
    <location>
        <position position="115"/>
    </location>
    <ligand>
        <name>substrate</name>
    </ligand>
</feature>
<feature type="binding site" evidence="1">
    <location>
        <begin position="120"/>
        <end position="122"/>
    </location>
    <ligand>
        <name>substrate</name>
    </ligand>
</feature>
<feature type="binding site" evidence="1">
    <location>
        <position position="126"/>
    </location>
    <ligand>
        <name>substrate</name>
    </ligand>
</feature>
<feature type="binding site" evidence="1">
    <location>
        <begin position="195"/>
        <end position="200"/>
    </location>
    <ligand>
        <name>NADP(+)</name>
        <dbReference type="ChEBI" id="CHEBI:58349"/>
    </ligand>
</feature>
<feature type="site" description="Important for activity" evidence="1">
    <location>
        <position position="105"/>
    </location>
</feature>
<gene>
    <name evidence="1" type="primary">hemA</name>
    <name type="ordered locus">Reut_A3043</name>
</gene>